<sequence length="138" mass="15735">MPNFSGNWKIIRSENFEDLLKVLGVNVMLRKIAVAAASKPAVEIKQEGDTFYIKTSTTVRTTEINFKIGEEFEEQTVDGRPCKSLVKWESENKMVCEQRLLKGEGPKTSWTRELTNDGELILTMTADDIVCTRVYVRE</sequence>
<gene>
    <name type="primary">CRABP2</name>
</gene>
<feature type="chain" id="PRO_0000067414" description="Cellular retinoic acid-binding protein 2">
    <location>
        <begin position="1"/>
        <end position="138"/>
    </location>
</feature>
<feature type="short sequence motif" description="Nuclear localization signal" evidence="1">
    <location>
        <begin position="21"/>
        <end position="31"/>
    </location>
</feature>
<feature type="binding site" evidence="1">
    <location>
        <begin position="133"/>
        <end position="135"/>
    </location>
    <ligand>
        <name>all-trans-retinoate</name>
        <dbReference type="ChEBI" id="CHEBI:35291"/>
    </ligand>
</feature>
<feature type="cross-link" description="Glycyl lysine isopeptide (Lys-Gly) (interchain with G-Cter in SUMO)" evidence="1">
    <location>
        <position position="102"/>
    </location>
</feature>
<organism>
    <name type="scientific">Bos taurus</name>
    <name type="common">Bovine</name>
    <dbReference type="NCBI Taxonomy" id="9913"/>
    <lineage>
        <taxon>Eukaryota</taxon>
        <taxon>Metazoa</taxon>
        <taxon>Chordata</taxon>
        <taxon>Craniata</taxon>
        <taxon>Vertebrata</taxon>
        <taxon>Euteleostomi</taxon>
        <taxon>Mammalia</taxon>
        <taxon>Eutheria</taxon>
        <taxon>Laurasiatheria</taxon>
        <taxon>Artiodactyla</taxon>
        <taxon>Ruminantia</taxon>
        <taxon>Pecora</taxon>
        <taxon>Bovidae</taxon>
        <taxon>Bovinae</taxon>
        <taxon>Bos</taxon>
    </lineage>
</organism>
<name>RABP2_BOVIN</name>
<keyword id="KW-0963">Cytoplasm</keyword>
<keyword id="KW-0256">Endoplasmic reticulum</keyword>
<keyword id="KW-1017">Isopeptide bond</keyword>
<keyword id="KW-0539">Nucleus</keyword>
<keyword id="KW-1185">Reference proteome</keyword>
<keyword id="KW-0683">Retinol-binding</keyword>
<keyword id="KW-0813">Transport</keyword>
<keyword id="KW-0832">Ubl conjugation</keyword>
<keyword id="KW-0845">Vitamin A</keyword>
<evidence type="ECO:0000250" key="1"/>
<evidence type="ECO:0000305" key="2"/>
<accession>Q5PXY7</accession>
<reference key="1">
    <citation type="submission" date="2004-11" db="EMBL/GenBank/DDBJ databases">
        <title>Bovine cellular retinoic acid binding protein 2.</title>
        <authorList>
            <person name="Jeong Y.-H."/>
            <person name="Lee S.-M."/>
            <person name="Park H.-Y."/>
            <person name="Kim H.-M."/>
            <person name="Yoon D.-H."/>
            <person name="Chung E.-R."/>
            <person name="Kang M.-J."/>
        </authorList>
    </citation>
    <scope>NUCLEOTIDE SEQUENCE [MRNA]</scope>
</reference>
<dbReference type="EMBL" id="AY821680">
    <property type="protein sequence ID" value="AAV84002.1"/>
    <property type="molecule type" value="mRNA"/>
</dbReference>
<dbReference type="RefSeq" id="NP_001008670.1">
    <property type="nucleotide sequence ID" value="NM_001008670.1"/>
</dbReference>
<dbReference type="BMRB" id="Q5PXY7"/>
<dbReference type="SMR" id="Q5PXY7"/>
<dbReference type="FunCoup" id="Q5PXY7">
    <property type="interactions" value="91"/>
</dbReference>
<dbReference type="STRING" id="9913.ENSBTAP00000062025"/>
<dbReference type="PaxDb" id="9913-ENSBTAP00000007515"/>
<dbReference type="GeneID" id="493998"/>
<dbReference type="KEGG" id="bta:493998"/>
<dbReference type="CTD" id="1382"/>
<dbReference type="eggNOG" id="KOG4015">
    <property type="taxonomic scope" value="Eukaryota"/>
</dbReference>
<dbReference type="InParanoid" id="Q5PXY7"/>
<dbReference type="OrthoDB" id="195110at2759"/>
<dbReference type="Proteomes" id="UP000009136">
    <property type="component" value="Unplaced"/>
</dbReference>
<dbReference type="GO" id="GO:0005737">
    <property type="term" value="C:cytoplasm"/>
    <property type="evidence" value="ECO:0000250"/>
    <property type="project" value="AgBase"/>
</dbReference>
<dbReference type="GO" id="GO:0005829">
    <property type="term" value="C:cytosol"/>
    <property type="evidence" value="ECO:0000318"/>
    <property type="project" value="GO_Central"/>
</dbReference>
<dbReference type="GO" id="GO:0005783">
    <property type="term" value="C:endoplasmic reticulum"/>
    <property type="evidence" value="ECO:0007669"/>
    <property type="project" value="UniProtKB-SubCell"/>
</dbReference>
<dbReference type="GO" id="GO:0005634">
    <property type="term" value="C:nucleus"/>
    <property type="evidence" value="ECO:0000318"/>
    <property type="project" value="GO_Central"/>
</dbReference>
<dbReference type="GO" id="GO:0005504">
    <property type="term" value="F:fatty acid binding"/>
    <property type="evidence" value="ECO:0000318"/>
    <property type="project" value="GO_Central"/>
</dbReference>
<dbReference type="GO" id="GO:0016918">
    <property type="term" value="F:retinal binding"/>
    <property type="evidence" value="ECO:0007669"/>
    <property type="project" value="UniProtKB-KW"/>
</dbReference>
<dbReference type="GO" id="GO:0001972">
    <property type="term" value="F:retinoic acid binding"/>
    <property type="evidence" value="ECO:0000318"/>
    <property type="project" value="GO_Central"/>
</dbReference>
<dbReference type="GO" id="GO:0019841">
    <property type="term" value="F:retinol binding"/>
    <property type="evidence" value="ECO:0007669"/>
    <property type="project" value="UniProtKB-KW"/>
</dbReference>
<dbReference type="GO" id="GO:0015908">
    <property type="term" value="P:fatty acid transport"/>
    <property type="evidence" value="ECO:0000318"/>
    <property type="project" value="GO_Central"/>
</dbReference>
<dbReference type="CDD" id="cd19461">
    <property type="entry name" value="CRABP2"/>
    <property type="match status" value="1"/>
</dbReference>
<dbReference type="FunFam" id="2.40.128.20:FF:000001">
    <property type="entry name" value="Fatty acid-binding protein, adipocyte"/>
    <property type="match status" value="1"/>
</dbReference>
<dbReference type="Gene3D" id="2.40.128.20">
    <property type="match status" value="1"/>
</dbReference>
<dbReference type="InterPro" id="IPR012674">
    <property type="entry name" value="Calycin"/>
</dbReference>
<dbReference type="InterPro" id="IPR000463">
    <property type="entry name" value="Fatty_acid-bd"/>
</dbReference>
<dbReference type="InterPro" id="IPR031259">
    <property type="entry name" value="ILBP"/>
</dbReference>
<dbReference type="InterPro" id="IPR000566">
    <property type="entry name" value="Lipocln_cytosolic_FA-bd_dom"/>
</dbReference>
<dbReference type="PANTHER" id="PTHR11955">
    <property type="entry name" value="FATTY ACID BINDING PROTEIN"/>
    <property type="match status" value="1"/>
</dbReference>
<dbReference type="Pfam" id="PF00061">
    <property type="entry name" value="Lipocalin"/>
    <property type="match status" value="1"/>
</dbReference>
<dbReference type="PRINTS" id="PR00178">
    <property type="entry name" value="FATTYACIDBP"/>
</dbReference>
<dbReference type="SUPFAM" id="SSF50814">
    <property type="entry name" value="Lipocalins"/>
    <property type="match status" value="1"/>
</dbReference>
<dbReference type="PROSITE" id="PS00214">
    <property type="entry name" value="FABP"/>
    <property type="match status" value="1"/>
</dbReference>
<comment type="function">
    <text evidence="1">Transports retinoic acid to the nucleus. Regulates the access of retinoic acid to the nuclear retinoic acid receptors (By similarity).</text>
</comment>
<comment type="subunit">
    <text evidence="1">Interacts with importin alpha, RXR and RARA.</text>
</comment>
<comment type="subcellular location">
    <subcellularLocation>
        <location evidence="1">Cytoplasm</location>
    </subcellularLocation>
    <subcellularLocation>
        <location evidence="1">Endoplasmic reticulum</location>
    </subcellularLocation>
    <subcellularLocation>
        <location evidence="1">Nucleus</location>
    </subcellularLocation>
    <text evidence="1">Upon ligand binding, a conformation change exposes a nuclear localization motif and the protein is transported into the nucleus.</text>
</comment>
<comment type="domain">
    <text evidence="1">Forms a beta-barrel structure that accommodates hydrophobic ligands in its interior.</text>
</comment>
<comment type="PTM">
    <text>Sumoylated in response to retinoic acid binding, sumoylation is critical for dissociation from ER and subsequent nuclear translocation.</text>
</comment>
<comment type="similarity">
    <text evidence="2">Belongs to the calycin superfamily. Fatty-acid binding protein (FABP) family.</text>
</comment>
<proteinExistence type="evidence at transcript level"/>
<protein>
    <recommendedName>
        <fullName>Cellular retinoic acid-binding protein 2</fullName>
    </recommendedName>
    <alternativeName>
        <fullName>Cellular retinoic acid-binding protein II</fullName>
        <shortName>CRABP-II</shortName>
    </alternativeName>
</protein>